<organism>
    <name type="scientific">Conus bullatus</name>
    <name type="common">Bubble cone</name>
    <dbReference type="NCBI Taxonomy" id="89438"/>
    <lineage>
        <taxon>Eukaryota</taxon>
        <taxon>Metazoa</taxon>
        <taxon>Spiralia</taxon>
        <taxon>Lophotrochozoa</taxon>
        <taxon>Mollusca</taxon>
        <taxon>Gastropoda</taxon>
        <taxon>Caenogastropoda</taxon>
        <taxon>Neogastropoda</taxon>
        <taxon>Conoidea</taxon>
        <taxon>Conidae</taxon>
        <taxon>Conus</taxon>
        <taxon>Textilia</taxon>
    </lineage>
</organism>
<keyword id="KW-0027">Amidation</keyword>
<keyword id="KW-1015">Disulfide bond</keyword>
<keyword id="KW-0528">Neurotoxin</keyword>
<keyword id="KW-0629">Postsynaptic neurotoxin</keyword>
<keyword id="KW-0964">Secreted</keyword>
<keyword id="KW-0732">Signal</keyword>
<keyword id="KW-0800">Toxin</keyword>
<comment type="subcellular location">
    <subcellularLocation>
        <location evidence="1">Secreted</location>
    </subcellularLocation>
</comment>
<comment type="tissue specificity">
    <text>Expressed by the venom duct.</text>
</comment>
<comment type="domain">
    <text>The cysteine framework is I (CC-C-C). Alpha4/4 pattern.</text>
</comment>
<comment type="similarity">
    <text evidence="5">Belongs to the conotoxin A superfamily.</text>
</comment>
<protein>
    <recommendedName>
        <fullName>Conotoxin Bu1.2</fullName>
    </recommendedName>
</protein>
<evidence type="ECO:0000250" key="1"/>
<evidence type="ECO:0000250" key="2">
    <source>
        <dbReference type="UniProtKB" id="P69657"/>
    </source>
</evidence>
<evidence type="ECO:0000255" key="3"/>
<evidence type="ECO:0000256" key="4">
    <source>
        <dbReference type="SAM" id="MobiDB-lite"/>
    </source>
</evidence>
<evidence type="ECO:0000305" key="5"/>
<accession>P0CY87</accession>
<reference key="1">
    <citation type="patent" date="2007-11-07" number="EP1852440">
        <title>Alpha-conotoxin peptides.</title>
        <authorList>
            <person name="Watkins M."/>
            <person name="Hillyard D.R."/>
            <person name="McIntosh M.J."/>
            <person name="Jones R.M."/>
            <person name="Olivera B.M."/>
        </authorList>
    </citation>
    <scope>NUCLEOTIDE SEQUENCE</scope>
</reference>
<reference key="2">
    <citation type="journal article" date="2010" name="J. Mol. Evol.">
        <title>Evolution of conus peptide genes: duplication and positive selection in the A-Superfamily.</title>
        <authorList>
            <person name="Puillandre N."/>
            <person name="Watkins M."/>
            <person name="Olivera B.M."/>
        </authorList>
    </citation>
    <scope>NOMENCLATURE</scope>
</reference>
<dbReference type="EMBL" id="FB299972">
    <property type="protein sequence ID" value="CAR81557.1"/>
    <property type="molecule type" value="Unassigned_DNA"/>
</dbReference>
<dbReference type="GO" id="GO:0005576">
    <property type="term" value="C:extracellular region"/>
    <property type="evidence" value="ECO:0007669"/>
    <property type="project" value="UniProtKB-SubCell"/>
</dbReference>
<dbReference type="GO" id="GO:0035792">
    <property type="term" value="C:host cell postsynaptic membrane"/>
    <property type="evidence" value="ECO:0007669"/>
    <property type="project" value="UniProtKB-KW"/>
</dbReference>
<dbReference type="GO" id="GO:0030550">
    <property type="term" value="F:acetylcholine receptor inhibitor activity"/>
    <property type="evidence" value="ECO:0007669"/>
    <property type="project" value="InterPro"/>
</dbReference>
<dbReference type="GO" id="GO:0090729">
    <property type="term" value="F:toxin activity"/>
    <property type="evidence" value="ECO:0007669"/>
    <property type="project" value="UniProtKB-KW"/>
</dbReference>
<dbReference type="InterPro" id="IPR009958">
    <property type="entry name" value="Conotoxin_a-typ"/>
</dbReference>
<dbReference type="Pfam" id="PF07365">
    <property type="entry name" value="Toxin_8"/>
    <property type="match status" value="1"/>
</dbReference>
<proteinExistence type="evidence at transcript level"/>
<feature type="signal peptide" evidence="3">
    <location>
        <begin position="1"/>
        <end position="16"/>
    </location>
</feature>
<feature type="propeptide" id="PRO_0000409990" evidence="1">
    <location>
        <begin position="17"/>
        <end position="42"/>
    </location>
</feature>
<feature type="peptide" id="PRO_0000409991" description="Conotoxin Bu1.2">
    <location>
        <begin position="43"/>
        <end position="58"/>
    </location>
</feature>
<feature type="region of interest" description="Disordered" evidence="4">
    <location>
        <begin position="18"/>
        <end position="43"/>
    </location>
</feature>
<feature type="compositionally biased region" description="Acidic residues" evidence="4">
    <location>
        <begin position="19"/>
        <end position="31"/>
    </location>
</feature>
<feature type="modified residue" description="Glycine amide" evidence="1">
    <location>
        <position position="58"/>
    </location>
</feature>
<feature type="disulfide bond" evidence="2">
    <location>
        <begin position="46"/>
        <end position="52"/>
    </location>
</feature>
<feature type="disulfide bond" evidence="2">
    <location>
        <begin position="47"/>
        <end position="57"/>
    </location>
</feature>
<name>CA112_CONBU</name>
<sequence>MFTVFLLVVLATTVVSFSTDDESDGSNEEPSADQAARSAMNRPPGCCNNPACVKHRCGG</sequence>